<reference key="1">
    <citation type="journal article" date="2002" name="Proc. Natl. Acad. Sci. U.S.A.">
        <title>Extensive mosaic structure revealed by the complete genome sequence of uropathogenic Escherichia coli.</title>
        <authorList>
            <person name="Welch R.A."/>
            <person name="Burland V."/>
            <person name="Plunkett G. III"/>
            <person name="Redford P."/>
            <person name="Roesch P."/>
            <person name="Rasko D."/>
            <person name="Buckles E.L."/>
            <person name="Liou S.-R."/>
            <person name="Boutin A."/>
            <person name="Hackett J."/>
            <person name="Stroud D."/>
            <person name="Mayhew G.F."/>
            <person name="Rose D.J."/>
            <person name="Zhou S."/>
            <person name="Schwartz D.C."/>
            <person name="Perna N.T."/>
            <person name="Mobley H.L.T."/>
            <person name="Donnenberg M.S."/>
            <person name="Blattner F.R."/>
        </authorList>
    </citation>
    <scope>NUCLEOTIDE SEQUENCE [LARGE SCALE GENOMIC DNA]</scope>
    <source>
        <strain>CFT073 / ATCC 700928 / UPEC</strain>
    </source>
</reference>
<evidence type="ECO:0000255" key="1">
    <source>
        <dbReference type="HAMAP-Rule" id="MF_01055"/>
    </source>
</evidence>
<evidence type="ECO:0000305" key="2"/>
<protein>
    <recommendedName>
        <fullName evidence="1">Protein FixA</fullName>
    </recommendedName>
</protein>
<accession>Q8FLA3</accession>
<sequence>MKIITCYKCVPDEQDIAVNNADGSLDFSKADAKISQYDLNAIEAACQLKQQAAEAQVTALSVGGKALTNAKGRKDVLSRGPDELIVVIDDQFEQALPQQTASVLAAAAQKAGFDLILCGDGSSDLYAQQVGLLVGEILNIPAVNGVSKIISLTADTLTVERELEDETETLSIPLPAVVAVSTDINSPQIPSMKAILGAAKKPVQVWSAADIGFNAEAAWSEQQVAAPKQRERQRIVIEGDGEEQIAAFAENLRKVI</sequence>
<organism>
    <name type="scientific">Escherichia coli O6:H1 (strain CFT073 / ATCC 700928 / UPEC)</name>
    <dbReference type="NCBI Taxonomy" id="199310"/>
    <lineage>
        <taxon>Bacteria</taxon>
        <taxon>Pseudomonadati</taxon>
        <taxon>Pseudomonadota</taxon>
        <taxon>Gammaproteobacteria</taxon>
        <taxon>Enterobacterales</taxon>
        <taxon>Enterobacteriaceae</taxon>
        <taxon>Escherichia</taxon>
    </lineage>
</organism>
<keyword id="KW-0249">Electron transport</keyword>
<keyword id="KW-1185">Reference proteome</keyword>
<keyword id="KW-0813">Transport</keyword>
<comment type="function">
    <text evidence="1">Required for anaerobic carnitine reduction. May bring reductant to CaiA.</text>
</comment>
<comment type="pathway">
    <text evidence="1">Amine and polyamine metabolism; carnitine metabolism.</text>
</comment>
<comment type="subunit">
    <text evidence="1">Heterodimer of FixA and FixB.</text>
</comment>
<comment type="similarity">
    <text evidence="1">Belongs to the ETF beta-subunit/FixA family.</text>
</comment>
<comment type="sequence caution" evidence="2">
    <conflict type="erroneous initiation">
        <sequence resource="EMBL-CDS" id="AAN78548"/>
    </conflict>
</comment>
<name>FIXA_ECOL6</name>
<dbReference type="EMBL" id="AE014075">
    <property type="protein sequence ID" value="AAN78548.1"/>
    <property type="status" value="ALT_INIT"/>
    <property type="molecule type" value="Genomic_DNA"/>
</dbReference>
<dbReference type="RefSeq" id="WP_000692217.1">
    <property type="nucleotide sequence ID" value="NZ_CP051263.1"/>
</dbReference>
<dbReference type="SMR" id="Q8FLA3"/>
<dbReference type="STRING" id="199310.c0050"/>
<dbReference type="KEGG" id="ecc:c0050"/>
<dbReference type="eggNOG" id="COG2086">
    <property type="taxonomic scope" value="Bacteria"/>
</dbReference>
<dbReference type="HOGENOM" id="CLU_060196_2_2_6"/>
<dbReference type="UniPathway" id="UPA00117"/>
<dbReference type="Proteomes" id="UP000001410">
    <property type="component" value="Chromosome"/>
</dbReference>
<dbReference type="GO" id="GO:0009055">
    <property type="term" value="F:electron transfer activity"/>
    <property type="evidence" value="ECO:0007669"/>
    <property type="project" value="InterPro"/>
</dbReference>
<dbReference type="GO" id="GO:0009437">
    <property type="term" value="P:carnitine metabolic process"/>
    <property type="evidence" value="ECO:0007669"/>
    <property type="project" value="UniProtKB-UniRule"/>
</dbReference>
<dbReference type="CDD" id="cd01714">
    <property type="entry name" value="ETF_beta"/>
    <property type="match status" value="1"/>
</dbReference>
<dbReference type="FunFam" id="3.40.50.620:FF:000072">
    <property type="entry name" value="Protein FixA homolog"/>
    <property type="match status" value="1"/>
</dbReference>
<dbReference type="Gene3D" id="3.40.50.620">
    <property type="entry name" value="HUPs"/>
    <property type="match status" value="1"/>
</dbReference>
<dbReference type="HAMAP" id="MF_01055">
    <property type="entry name" value="FixA"/>
    <property type="match status" value="1"/>
</dbReference>
<dbReference type="InterPro" id="IPR000049">
    <property type="entry name" value="ET-Flavoprotein_bsu_CS"/>
</dbReference>
<dbReference type="InterPro" id="IPR014730">
    <property type="entry name" value="ETF_a/b_N"/>
</dbReference>
<dbReference type="InterPro" id="IPR012255">
    <property type="entry name" value="ETF_b"/>
</dbReference>
<dbReference type="InterPro" id="IPR033948">
    <property type="entry name" value="ETF_beta_N"/>
</dbReference>
<dbReference type="InterPro" id="IPR023463">
    <property type="entry name" value="FixA"/>
</dbReference>
<dbReference type="InterPro" id="IPR014729">
    <property type="entry name" value="Rossmann-like_a/b/a_fold"/>
</dbReference>
<dbReference type="NCBIfam" id="NF002888">
    <property type="entry name" value="PRK03359.1"/>
    <property type="match status" value="1"/>
</dbReference>
<dbReference type="PANTHER" id="PTHR21294">
    <property type="entry name" value="ELECTRON TRANSFER FLAVOPROTEIN BETA-SUBUNIT"/>
    <property type="match status" value="1"/>
</dbReference>
<dbReference type="PANTHER" id="PTHR21294:SF17">
    <property type="entry name" value="PROTEIN FIXA"/>
    <property type="match status" value="1"/>
</dbReference>
<dbReference type="Pfam" id="PF01012">
    <property type="entry name" value="ETF"/>
    <property type="match status" value="1"/>
</dbReference>
<dbReference type="PIRSF" id="PIRSF000090">
    <property type="entry name" value="Beta-ETF"/>
    <property type="match status" value="1"/>
</dbReference>
<dbReference type="SMART" id="SM00893">
    <property type="entry name" value="ETF"/>
    <property type="match status" value="1"/>
</dbReference>
<dbReference type="SUPFAM" id="SSF52402">
    <property type="entry name" value="Adenine nucleotide alpha hydrolases-like"/>
    <property type="match status" value="1"/>
</dbReference>
<dbReference type="PROSITE" id="PS01065">
    <property type="entry name" value="ETF_BETA"/>
    <property type="match status" value="1"/>
</dbReference>
<proteinExistence type="inferred from homology"/>
<gene>
    <name evidence="1" type="primary">fixA</name>
    <name type="ordered locus">c0050</name>
</gene>
<feature type="chain" id="PRO_0000167893" description="Protein FixA">
    <location>
        <begin position="1"/>
        <end position="256"/>
    </location>
</feature>